<keyword id="KW-0238">DNA-binding</keyword>
<keyword id="KW-1185">Reference proteome</keyword>
<comment type="similarity">
    <text evidence="1">Belongs to the PDCD5 family.</text>
</comment>
<gene>
    <name type="ordered locus">MJ0691</name>
</gene>
<reference key="1">
    <citation type="journal article" date="1996" name="Science">
        <title>Complete genome sequence of the methanogenic archaeon, Methanococcus jannaschii.</title>
        <authorList>
            <person name="Bult C.J."/>
            <person name="White O."/>
            <person name="Olsen G.J."/>
            <person name="Zhou L."/>
            <person name="Fleischmann R.D."/>
            <person name="Sutton G.G."/>
            <person name="Blake J.A."/>
            <person name="FitzGerald L.M."/>
            <person name="Clayton R.A."/>
            <person name="Gocayne J.D."/>
            <person name="Kerlavage A.R."/>
            <person name="Dougherty B.A."/>
            <person name="Tomb J.-F."/>
            <person name="Adams M.D."/>
            <person name="Reich C.I."/>
            <person name="Overbeek R."/>
            <person name="Kirkness E.F."/>
            <person name="Weinstock K.G."/>
            <person name="Merrick J.M."/>
            <person name="Glodek A."/>
            <person name="Scott J.L."/>
            <person name="Geoghagen N.S.M."/>
            <person name="Weidman J.F."/>
            <person name="Fuhrmann J.L."/>
            <person name="Nguyen D."/>
            <person name="Utterback T.R."/>
            <person name="Kelley J.M."/>
            <person name="Peterson J.D."/>
            <person name="Sadow P.W."/>
            <person name="Hanna M.C."/>
            <person name="Cotton M.D."/>
            <person name="Roberts K.M."/>
            <person name="Hurst M.A."/>
            <person name="Kaine B.P."/>
            <person name="Borodovsky M."/>
            <person name="Klenk H.-P."/>
            <person name="Fraser C.M."/>
            <person name="Smith H.O."/>
            <person name="Woese C.R."/>
            <person name="Venter J.C."/>
        </authorList>
    </citation>
    <scope>NUCLEOTIDE SEQUENCE [LARGE SCALE GENOMIC DNA]</scope>
    <source>
        <strain>ATCC 43067 / DSM 2661 / JAL-1 / JCM 10045 / NBRC 100440</strain>
    </source>
</reference>
<name>Y691_METJA</name>
<feature type="chain" id="PRO_0000121555" description="DNA-binding protein MJ0691">
    <location>
        <begin position="1"/>
        <end position="109"/>
    </location>
</feature>
<organism>
    <name type="scientific">Methanocaldococcus jannaschii (strain ATCC 43067 / DSM 2661 / JAL-1 / JCM 10045 / NBRC 100440)</name>
    <name type="common">Methanococcus jannaschii</name>
    <dbReference type="NCBI Taxonomy" id="243232"/>
    <lineage>
        <taxon>Archaea</taxon>
        <taxon>Methanobacteriati</taxon>
        <taxon>Methanobacteriota</taxon>
        <taxon>Methanomada group</taxon>
        <taxon>Methanococci</taxon>
        <taxon>Methanococcales</taxon>
        <taxon>Methanocaldococcaceae</taxon>
        <taxon>Methanocaldococcus</taxon>
    </lineage>
</organism>
<evidence type="ECO:0000255" key="1">
    <source>
        <dbReference type="HAMAP-Rule" id="MF_00026"/>
    </source>
</evidence>
<accession>Q58103</accession>
<proteinExistence type="inferred from homology"/>
<protein>
    <recommendedName>
        <fullName evidence="1">DNA-binding protein MJ0691</fullName>
    </recommendedName>
</protein>
<dbReference type="EMBL" id="L77117">
    <property type="protein sequence ID" value="AAB98686.1"/>
    <property type="molecule type" value="Genomic_DNA"/>
</dbReference>
<dbReference type="PIR" id="C64386">
    <property type="entry name" value="C64386"/>
</dbReference>
<dbReference type="RefSeq" id="WP_010870196.1">
    <property type="nucleotide sequence ID" value="NC_000909.1"/>
</dbReference>
<dbReference type="SMR" id="Q58103"/>
<dbReference type="FunCoup" id="Q58103">
    <property type="interactions" value="100"/>
</dbReference>
<dbReference type="STRING" id="243232.MJ_0691"/>
<dbReference type="PaxDb" id="243232-MJ_0691"/>
<dbReference type="EnsemblBacteria" id="AAB98686">
    <property type="protein sequence ID" value="AAB98686"/>
    <property type="gene ID" value="MJ_0691"/>
</dbReference>
<dbReference type="GeneID" id="1451557"/>
<dbReference type="KEGG" id="mja:MJ_0691"/>
<dbReference type="eggNOG" id="arCOG04179">
    <property type="taxonomic scope" value="Archaea"/>
</dbReference>
<dbReference type="HOGENOM" id="CLU_122978_3_0_2"/>
<dbReference type="InParanoid" id="Q58103"/>
<dbReference type="OrthoDB" id="7912at2157"/>
<dbReference type="PhylomeDB" id="Q58103"/>
<dbReference type="Proteomes" id="UP000000805">
    <property type="component" value="Chromosome"/>
</dbReference>
<dbReference type="GO" id="GO:0005829">
    <property type="term" value="C:cytosol"/>
    <property type="evidence" value="ECO:0000318"/>
    <property type="project" value="GO_Central"/>
</dbReference>
<dbReference type="GO" id="GO:0003677">
    <property type="term" value="F:DNA binding"/>
    <property type="evidence" value="ECO:0007669"/>
    <property type="project" value="UniProtKB-UniRule"/>
</dbReference>
<dbReference type="Gene3D" id="1.10.8.140">
    <property type="entry name" value="PDCD5-like"/>
    <property type="match status" value="1"/>
</dbReference>
<dbReference type="HAMAP" id="MF_00026">
    <property type="entry name" value="dsDNA_bind"/>
    <property type="match status" value="1"/>
</dbReference>
<dbReference type="InterPro" id="IPR022889">
    <property type="entry name" value="DNA_bind_arc"/>
</dbReference>
<dbReference type="InterPro" id="IPR002836">
    <property type="entry name" value="PDCD5-like"/>
</dbReference>
<dbReference type="InterPro" id="IPR036883">
    <property type="entry name" value="PDCD5-like_sf"/>
</dbReference>
<dbReference type="NCBIfam" id="NF003268">
    <property type="entry name" value="PRK04239.1"/>
    <property type="match status" value="1"/>
</dbReference>
<dbReference type="PANTHER" id="PTHR10840">
    <property type="entry name" value="PROGRAMMED CELL DEATH PROTEIN 5"/>
    <property type="match status" value="1"/>
</dbReference>
<dbReference type="PANTHER" id="PTHR10840:SF0">
    <property type="entry name" value="PROGRAMMED CELL DEATH PROTEIN 5"/>
    <property type="match status" value="1"/>
</dbReference>
<dbReference type="Pfam" id="PF01984">
    <property type="entry name" value="dsDNA_bind"/>
    <property type="match status" value="1"/>
</dbReference>
<dbReference type="PIRSF" id="PIRSF015730">
    <property type="entry name" value="TFAR19"/>
    <property type="match status" value="1"/>
</dbReference>
<dbReference type="SUPFAM" id="SSF46950">
    <property type="entry name" value="Double-stranded DNA-binding domain"/>
    <property type="match status" value="1"/>
</dbReference>
<sequence>MDVEEIKRKKLLELQKKLAEQQQQEEALLEAEMQKRALLRKILTPEARERLERIRLARPEFAEAVEVQLIQLAQLGRLPIPLSDEDFKALLERISALTKRKREIKIVRK</sequence>